<evidence type="ECO:0000255" key="1"/>
<evidence type="ECO:0000305" key="2"/>
<keyword id="KW-1003">Cell membrane</keyword>
<keyword id="KW-0472">Membrane</keyword>
<keyword id="KW-1185">Reference proteome</keyword>
<keyword id="KW-0812">Transmembrane</keyword>
<keyword id="KW-1133">Transmembrane helix</keyword>
<protein>
    <recommendedName>
        <fullName>Putative enoyl-CoA hydratase/isomerase YhaR</fullName>
    </recommendedName>
</protein>
<reference key="1">
    <citation type="journal article" date="1997" name="Nature">
        <title>The complete genome sequence of the Gram-positive bacterium Bacillus subtilis.</title>
        <authorList>
            <person name="Kunst F."/>
            <person name="Ogasawara N."/>
            <person name="Moszer I."/>
            <person name="Albertini A.M."/>
            <person name="Alloni G."/>
            <person name="Azevedo V."/>
            <person name="Bertero M.G."/>
            <person name="Bessieres P."/>
            <person name="Bolotin A."/>
            <person name="Borchert S."/>
            <person name="Borriss R."/>
            <person name="Boursier L."/>
            <person name="Brans A."/>
            <person name="Braun M."/>
            <person name="Brignell S.C."/>
            <person name="Bron S."/>
            <person name="Brouillet S."/>
            <person name="Bruschi C.V."/>
            <person name="Caldwell B."/>
            <person name="Capuano V."/>
            <person name="Carter N.M."/>
            <person name="Choi S.-K."/>
            <person name="Codani J.-J."/>
            <person name="Connerton I.F."/>
            <person name="Cummings N.J."/>
            <person name="Daniel R.A."/>
            <person name="Denizot F."/>
            <person name="Devine K.M."/>
            <person name="Duesterhoeft A."/>
            <person name="Ehrlich S.D."/>
            <person name="Emmerson P.T."/>
            <person name="Entian K.-D."/>
            <person name="Errington J."/>
            <person name="Fabret C."/>
            <person name="Ferrari E."/>
            <person name="Foulger D."/>
            <person name="Fritz C."/>
            <person name="Fujita M."/>
            <person name="Fujita Y."/>
            <person name="Fuma S."/>
            <person name="Galizzi A."/>
            <person name="Galleron N."/>
            <person name="Ghim S.-Y."/>
            <person name="Glaser P."/>
            <person name="Goffeau A."/>
            <person name="Golightly E.J."/>
            <person name="Grandi G."/>
            <person name="Guiseppi G."/>
            <person name="Guy B.J."/>
            <person name="Haga K."/>
            <person name="Haiech J."/>
            <person name="Harwood C.R."/>
            <person name="Henaut A."/>
            <person name="Hilbert H."/>
            <person name="Holsappel S."/>
            <person name="Hosono S."/>
            <person name="Hullo M.-F."/>
            <person name="Itaya M."/>
            <person name="Jones L.-M."/>
            <person name="Joris B."/>
            <person name="Karamata D."/>
            <person name="Kasahara Y."/>
            <person name="Klaerr-Blanchard M."/>
            <person name="Klein C."/>
            <person name="Kobayashi Y."/>
            <person name="Koetter P."/>
            <person name="Koningstein G."/>
            <person name="Krogh S."/>
            <person name="Kumano M."/>
            <person name="Kurita K."/>
            <person name="Lapidus A."/>
            <person name="Lardinois S."/>
            <person name="Lauber J."/>
            <person name="Lazarevic V."/>
            <person name="Lee S.-M."/>
            <person name="Levine A."/>
            <person name="Liu H."/>
            <person name="Masuda S."/>
            <person name="Mauel C."/>
            <person name="Medigue C."/>
            <person name="Medina N."/>
            <person name="Mellado R.P."/>
            <person name="Mizuno M."/>
            <person name="Moestl D."/>
            <person name="Nakai S."/>
            <person name="Noback M."/>
            <person name="Noone D."/>
            <person name="O'Reilly M."/>
            <person name="Ogawa K."/>
            <person name="Ogiwara A."/>
            <person name="Oudega B."/>
            <person name="Park S.-H."/>
            <person name="Parro V."/>
            <person name="Pohl T.M."/>
            <person name="Portetelle D."/>
            <person name="Porwollik S."/>
            <person name="Prescott A.M."/>
            <person name="Presecan E."/>
            <person name="Pujic P."/>
            <person name="Purnelle B."/>
            <person name="Rapoport G."/>
            <person name="Rey M."/>
            <person name="Reynolds S."/>
            <person name="Rieger M."/>
            <person name="Rivolta C."/>
            <person name="Rocha E."/>
            <person name="Roche B."/>
            <person name="Rose M."/>
            <person name="Sadaie Y."/>
            <person name="Sato T."/>
            <person name="Scanlan E."/>
            <person name="Schleich S."/>
            <person name="Schroeter R."/>
            <person name="Scoffone F."/>
            <person name="Sekiguchi J."/>
            <person name="Sekowska A."/>
            <person name="Seror S.J."/>
            <person name="Serror P."/>
            <person name="Shin B.-S."/>
            <person name="Soldo B."/>
            <person name="Sorokin A."/>
            <person name="Tacconi E."/>
            <person name="Takagi T."/>
            <person name="Takahashi H."/>
            <person name="Takemaru K."/>
            <person name="Takeuchi M."/>
            <person name="Tamakoshi A."/>
            <person name="Tanaka T."/>
            <person name="Terpstra P."/>
            <person name="Tognoni A."/>
            <person name="Tosato V."/>
            <person name="Uchiyama S."/>
            <person name="Vandenbol M."/>
            <person name="Vannier F."/>
            <person name="Vassarotti A."/>
            <person name="Viari A."/>
            <person name="Wambutt R."/>
            <person name="Wedler E."/>
            <person name="Wedler H."/>
            <person name="Weitzenegger T."/>
            <person name="Winters P."/>
            <person name="Wipat A."/>
            <person name="Yamamoto H."/>
            <person name="Yamane K."/>
            <person name="Yasumoto K."/>
            <person name="Yata K."/>
            <person name="Yoshida K."/>
            <person name="Yoshikawa H.-F."/>
            <person name="Zumstein E."/>
            <person name="Yoshikawa H."/>
            <person name="Danchin A."/>
        </authorList>
    </citation>
    <scope>NUCLEOTIDE SEQUENCE [LARGE SCALE GENOMIC DNA]</scope>
    <source>
        <strain>168</strain>
    </source>
</reference>
<reference key="2">
    <citation type="journal article" date="2009" name="Microbiology">
        <title>From a consortium sequence to a unified sequence: the Bacillus subtilis 168 reference genome a decade later.</title>
        <authorList>
            <person name="Barbe V."/>
            <person name="Cruveiller S."/>
            <person name="Kunst F."/>
            <person name="Lenoble P."/>
            <person name="Meurice G."/>
            <person name="Sekowska A."/>
            <person name="Vallenet D."/>
            <person name="Wang T."/>
            <person name="Moszer I."/>
            <person name="Medigue C."/>
            <person name="Danchin A."/>
        </authorList>
    </citation>
    <scope>SEQUENCE REVISION TO 61</scope>
</reference>
<reference key="3">
    <citation type="journal article" date="1998" name="Microbiology">
        <title>The 172 kb prkA-addAB region from 83 degrees to 97 degrees of the Bacillus subtilis chromosome contains several dysfunctional genes, the glyB marker, many genes encoding transporter proteins, and the ubiquitous hit gene.</title>
        <authorList>
            <person name="Noback M.A."/>
            <person name="Holsappel S."/>
            <person name="Kiewiet R."/>
            <person name="Terpstra P."/>
            <person name="Wambutt R."/>
            <person name="Wedler H."/>
            <person name="Venema G."/>
            <person name="Bron S."/>
        </authorList>
    </citation>
    <scope>NUCLEOTIDE SEQUENCE [GENOMIC DNA] OF 62-255</scope>
    <source>
        <strain>168</strain>
    </source>
</reference>
<feature type="chain" id="PRO_0000360646" description="Putative enoyl-CoA hydratase/isomerase YhaR">
    <location>
        <begin position="1"/>
        <end position="255"/>
    </location>
</feature>
<feature type="transmembrane region" description="Helical" evidence="1">
    <location>
        <begin position="96"/>
        <end position="116"/>
    </location>
</feature>
<feature type="transmembrane region" description="Helical" evidence="1">
    <location>
        <begin position="126"/>
        <end position="146"/>
    </location>
</feature>
<dbReference type="EMBL" id="AL009126">
    <property type="protein sequence ID" value="CAB12828.3"/>
    <property type="molecule type" value="Genomic_DNA"/>
</dbReference>
<dbReference type="EMBL" id="Y14078">
    <property type="protein sequence ID" value="CAA74425.1"/>
    <property type="status" value="ALT_SEQ"/>
    <property type="molecule type" value="Genomic_DNA"/>
</dbReference>
<dbReference type="PIR" id="D69819">
    <property type="entry name" value="D69819"/>
</dbReference>
<dbReference type="RefSeq" id="NP_388869.3">
    <property type="nucleotide sequence ID" value="NC_000964.3"/>
</dbReference>
<dbReference type="RefSeq" id="WP_003245167.1">
    <property type="nucleotide sequence ID" value="NZ_OZ025638.1"/>
</dbReference>
<dbReference type="SMR" id="O07533"/>
<dbReference type="FunCoup" id="O07533">
    <property type="interactions" value="47"/>
</dbReference>
<dbReference type="STRING" id="224308.BSU09880"/>
<dbReference type="jPOST" id="O07533"/>
<dbReference type="PaxDb" id="224308-BSU09880"/>
<dbReference type="EnsemblBacteria" id="CAB12828">
    <property type="protein sequence ID" value="CAB12828"/>
    <property type="gene ID" value="BSU_09880"/>
</dbReference>
<dbReference type="GeneID" id="939767"/>
<dbReference type="KEGG" id="bsu:BSU09880"/>
<dbReference type="PATRIC" id="fig|224308.179.peg.1060"/>
<dbReference type="eggNOG" id="COG1024">
    <property type="taxonomic scope" value="Bacteria"/>
</dbReference>
<dbReference type="InParanoid" id="O07533"/>
<dbReference type="OrthoDB" id="9775794at2"/>
<dbReference type="PhylomeDB" id="O07533"/>
<dbReference type="BioCyc" id="BSUB:BSU09880-MONOMER"/>
<dbReference type="Proteomes" id="UP000001570">
    <property type="component" value="Chromosome"/>
</dbReference>
<dbReference type="GO" id="GO:0005886">
    <property type="term" value="C:plasma membrane"/>
    <property type="evidence" value="ECO:0007669"/>
    <property type="project" value="UniProtKB-SubCell"/>
</dbReference>
<dbReference type="CDD" id="cd06558">
    <property type="entry name" value="crotonase-like"/>
    <property type="match status" value="1"/>
</dbReference>
<dbReference type="Gene3D" id="3.90.226.10">
    <property type="entry name" value="2-enoyl-CoA Hydratase, Chain A, domain 1"/>
    <property type="match status" value="1"/>
</dbReference>
<dbReference type="Gene3D" id="1.10.12.10">
    <property type="entry name" value="Lyase 2-enoyl-coa Hydratase, Chain A, domain 2"/>
    <property type="match status" value="1"/>
</dbReference>
<dbReference type="InterPro" id="IPR029045">
    <property type="entry name" value="ClpP/crotonase-like_dom_sf"/>
</dbReference>
<dbReference type="InterPro" id="IPR001753">
    <property type="entry name" value="Enoyl-CoA_hydra/iso"/>
</dbReference>
<dbReference type="InterPro" id="IPR014748">
    <property type="entry name" value="Enoyl-CoA_hydra_C"/>
</dbReference>
<dbReference type="NCBIfam" id="NF005804">
    <property type="entry name" value="PRK07659.1"/>
    <property type="match status" value="1"/>
</dbReference>
<dbReference type="PANTHER" id="PTHR43459:SF1">
    <property type="entry name" value="EG:BACN32G11.4 PROTEIN"/>
    <property type="match status" value="1"/>
</dbReference>
<dbReference type="PANTHER" id="PTHR43459">
    <property type="entry name" value="ENOYL-COA HYDRATASE"/>
    <property type="match status" value="1"/>
</dbReference>
<dbReference type="Pfam" id="PF00378">
    <property type="entry name" value="ECH_1"/>
    <property type="match status" value="1"/>
</dbReference>
<dbReference type="SUPFAM" id="SSF52096">
    <property type="entry name" value="ClpP/crotonase"/>
    <property type="match status" value="1"/>
</dbReference>
<organism>
    <name type="scientific">Bacillus subtilis (strain 168)</name>
    <dbReference type="NCBI Taxonomy" id="224308"/>
    <lineage>
        <taxon>Bacteria</taxon>
        <taxon>Bacillati</taxon>
        <taxon>Bacillota</taxon>
        <taxon>Bacilli</taxon>
        <taxon>Bacillales</taxon>
        <taxon>Bacillaceae</taxon>
        <taxon>Bacillus</taxon>
    </lineage>
</organism>
<sequence length="255" mass="27610">MEFVQYACNGAVAEIILNRPDAHHALNEQMLSELKEAVEMAAASEALIVLLRGSGKGFSAGGDIRMMTSEHDPDQFKRLMDTIEAVTLNLYQMKKVTIAAIHGAAAGLGLSLALCADIVLAEKNAVLAMNFIGIGLVPDGGGHYLLKKRIGEAKAKKLIWSGKKLSASEAADMGLLDGTFAGDPAEGARPIIETLLASPLLAMIETKGIFQSLQIEELKKVLSLERSAQERMRRTKDHQEGIRAFLEKREPKFQA</sequence>
<accession>O07533</accession>
<accession>O07525</accession>
<comment type="subcellular location">
    <subcellularLocation>
        <location evidence="2">Cell membrane</location>
        <topology evidence="2">Multi-pass membrane protein</topology>
    </subcellularLocation>
</comment>
<comment type="similarity">
    <text evidence="2">Belongs to the enoyl-CoA hydratase/isomerase family.</text>
</comment>
<comment type="sequence caution" evidence="2">
    <conflict type="erroneous termination">
        <sequence resource="EMBL-CDS" id="CAA74425"/>
    </conflict>
    <text>Extended C-terminus.</text>
</comment>
<comment type="sequence caution" evidence="2">
    <conflict type="frameshift">
        <sequence resource="EMBL-CDS" id="CAA74425"/>
    </conflict>
</comment>
<proteinExistence type="inferred from homology"/>
<gene>
    <name type="primary">yhaR</name>
    <name type="ordered locus">BSU09880</name>
</gene>
<name>YHAR_BACSU</name>